<comment type="cofactor">
    <cofactor evidence="1">
        <name>Mg(2+)</name>
        <dbReference type="ChEBI" id="CHEBI:18420"/>
    </cofactor>
    <cofactor evidence="1">
        <name>Mn(2+)</name>
        <dbReference type="ChEBI" id="CHEBI:29035"/>
    </cofactor>
    <text evidence="1">Binds 2 magnesium or manganese ions per subunit.</text>
</comment>
<comment type="similarity">
    <text evidence="1">Belongs to the RimK family.</text>
</comment>
<protein>
    <recommendedName>
        <fullName evidence="1">Probable alpha-L-glutamate ligase 1</fullName>
        <ecNumber evidence="1">6.3.2.-</ecNumber>
    </recommendedName>
</protein>
<reference key="1">
    <citation type="submission" date="2006-06" db="EMBL/GenBank/DDBJ databases">
        <title>Complete sequence of Pseudoalteromonas atlantica T6c.</title>
        <authorList>
            <consortium name="US DOE Joint Genome Institute"/>
            <person name="Copeland A."/>
            <person name="Lucas S."/>
            <person name="Lapidus A."/>
            <person name="Barry K."/>
            <person name="Detter J.C."/>
            <person name="Glavina del Rio T."/>
            <person name="Hammon N."/>
            <person name="Israni S."/>
            <person name="Dalin E."/>
            <person name="Tice H."/>
            <person name="Pitluck S."/>
            <person name="Saunders E."/>
            <person name="Brettin T."/>
            <person name="Bruce D."/>
            <person name="Han C."/>
            <person name="Tapia R."/>
            <person name="Gilna P."/>
            <person name="Schmutz J."/>
            <person name="Larimer F."/>
            <person name="Land M."/>
            <person name="Hauser L."/>
            <person name="Kyrpides N."/>
            <person name="Kim E."/>
            <person name="Karls A.C."/>
            <person name="Bartlett D."/>
            <person name="Higgins B.P."/>
            <person name="Richardson P."/>
        </authorList>
    </citation>
    <scope>NUCLEOTIDE SEQUENCE [LARGE SCALE GENOMIC DNA]</scope>
    <source>
        <strain>T6c / ATCC BAA-1087</strain>
    </source>
</reference>
<keyword id="KW-0067">ATP-binding</keyword>
<keyword id="KW-0436">Ligase</keyword>
<keyword id="KW-0460">Magnesium</keyword>
<keyword id="KW-0464">Manganese</keyword>
<keyword id="KW-0479">Metal-binding</keyword>
<keyword id="KW-0547">Nucleotide-binding</keyword>
<keyword id="KW-0648">Protein biosynthesis</keyword>
<sequence length="302" mass="32202">MKIAILSRNKKLYSTRRLQEAALARGHEVDIIDTLHCYMDISSNKPSVRFKGEPLPQYDAIIPRIGASITFYGTAVVRQFEMMGSFSVNESVAISRSRDKLRSMQLLSRKGIGLPRTGFAHSPDNIKDLIANVGGAPVVIKLLEGTQGIGVVLADTNKAAESIVEAFMGIKANILVQEYIKEAGGADIRCFVVGGKVVAAMKRQGAPGEFRSNLHRGGSAALVKLTAVERATAVSAAGAMGLNVCGVDLLRSSHGPVVMEVNSSPGLEGIEAATSKDVANMIIEFIENKKSKPHSTKTRGNG</sequence>
<evidence type="ECO:0000255" key="1">
    <source>
        <dbReference type="HAMAP-Rule" id="MF_01552"/>
    </source>
</evidence>
<gene>
    <name evidence="1" type="primary">rimK1</name>
    <name type="ordered locus">Patl_2779</name>
</gene>
<accession>Q15S48</accession>
<dbReference type="EC" id="6.3.2.-" evidence="1"/>
<dbReference type="EMBL" id="CP000388">
    <property type="protein sequence ID" value="ABG41290.1"/>
    <property type="molecule type" value="Genomic_DNA"/>
</dbReference>
<dbReference type="RefSeq" id="WP_011575548.1">
    <property type="nucleotide sequence ID" value="NC_008228.1"/>
</dbReference>
<dbReference type="SMR" id="Q15S48"/>
<dbReference type="STRING" id="342610.Patl_2779"/>
<dbReference type="KEGG" id="pat:Patl_2779"/>
<dbReference type="eggNOG" id="COG0189">
    <property type="taxonomic scope" value="Bacteria"/>
</dbReference>
<dbReference type="HOGENOM" id="CLU_054353_0_1_6"/>
<dbReference type="OrthoDB" id="3865600at2"/>
<dbReference type="Proteomes" id="UP000001981">
    <property type="component" value="Chromosome"/>
</dbReference>
<dbReference type="GO" id="GO:0005737">
    <property type="term" value="C:cytoplasm"/>
    <property type="evidence" value="ECO:0007669"/>
    <property type="project" value="TreeGrafter"/>
</dbReference>
<dbReference type="GO" id="GO:0005524">
    <property type="term" value="F:ATP binding"/>
    <property type="evidence" value="ECO:0007669"/>
    <property type="project" value="UniProtKB-UniRule"/>
</dbReference>
<dbReference type="GO" id="GO:0046872">
    <property type="term" value="F:metal ion binding"/>
    <property type="evidence" value="ECO:0007669"/>
    <property type="project" value="UniProtKB-KW"/>
</dbReference>
<dbReference type="GO" id="GO:0018169">
    <property type="term" value="F:ribosomal S6-glutamic acid ligase activity"/>
    <property type="evidence" value="ECO:0007669"/>
    <property type="project" value="TreeGrafter"/>
</dbReference>
<dbReference type="GO" id="GO:0036211">
    <property type="term" value="P:protein modification process"/>
    <property type="evidence" value="ECO:0007669"/>
    <property type="project" value="InterPro"/>
</dbReference>
<dbReference type="GO" id="GO:0009432">
    <property type="term" value="P:SOS response"/>
    <property type="evidence" value="ECO:0007669"/>
    <property type="project" value="TreeGrafter"/>
</dbReference>
<dbReference type="GO" id="GO:0006412">
    <property type="term" value="P:translation"/>
    <property type="evidence" value="ECO:0007669"/>
    <property type="project" value="UniProtKB-KW"/>
</dbReference>
<dbReference type="FunFam" id="3.40.50.20:FF:000004">
    <property type="entry name" value="Probable alpha-L-glutamate ligase"/>
    <property type="match status" value="1"/>
</dbReference>
<dbReference type="FunFam" id="3.30.1490.20:FF:000005">
    <property type="entry name" value="Probable alpha-L-glutamate ligase 1"/>
    <property type="match status" value="1"/>
</dbReference>
<dbReference type="Gene3D" id="3.40.50.20">
    <property type="match status" value="1"/>
</dbReference>
<dbReference type="Gene3D" id="3.30.1490.20">
    <property type="entry name" value="ATP-grasp fold, A domain"/>
    <property type="match status" value="1"/>
</dbReference>
<dbReference type="Gene3D" id="3.30.470.20">
    <property type="entry name" value="ATP-grasp fold, B domain"/>
    <property type="match status" value="1"/>
</dbReference>
<dbReference type="HAMAP" id="MF_01552">
    <property type="entry name" value="RimK"/>
    <property type="match status" value="1"/>
</dbReference>
<dbReference type="InterPro" id="IPR011761">
    <property type="entry name" value="ATP-grasp"/>
</dbReference>
<dbReference type="InterPro" id="IPR013651">
    <property type="entry name" value="ATP-grasp_RimK-type"/>
</dbReference>
<dbReference type="InterPro" id="IPR013815">
    <property type="entry name" value="ATP_grasp_subdomain_1"/>
</dbReference>
<dbReference type="InterPro" id="IPR023533">
    <property type="entry name" value="RimK"/>
</dbReference>
<dbReference type="InterPro" id="IPR041107">
    <property type="entry name" value="Rimk_N"/>
</dbReference>
<dbReference type="InterPro" id="IPR004666">
    <property type="entry name" value="Rp_bS6_RimK/Lys_biosynth_LsyX"/>
</dbReference>
<dbReference type="NCBIfam" id="NF007764">
    <property type="entry name" value="PRK10446.1"/>
    <property type="match status" value="1"/>
</dbReference>
<dbReference type="NCBIfam" id="TIGR00768">
    <property type="entry name" value="rimK_fam"/>
    <property type="match status" value="1"/>
</dbReference>
<dbReference type="PANTHER" id="PTHR21621:SF7">
    <property type="entry name" value="RIBOSOMAL PROTEIN BS6--L-GLUTAMATE LIGASE"/>
    <property type="match status" value="1"/>
</dbReference>
<dbReference type="PANTHER" id="PTHR21621">
    <property type="entry name" value="RIBOSOMAL PROTEIN S6 MODIFICATION PROTEIN"/>
    <property type="match status" value="1"/>
</dbReference>
<dbReference type="Pfam" id="PF08443">
    <property type="entry name" value="RimK"/>
    <property type="match status" value="1"/>
</dbReference>
<dbReference type="Pfam" id="PF18030">
    <property type="entry name" value="Rimk_N"/>
    <property type="match status" value="1"/>
</dbReference>
<dbReference type="SUPFAM" id="SSF56059">
    <property type="entry name" value="Glutathione synthetase ATP-binding domain-like"/>
    <property type="match status" value="1"/>
</dbReference>
<dbReference type="PROSITE" id="PS50975">
    <property type="entry name" value="ATP_GRASP"/>
    <property type="match status" value="1"/>
</dbReference>
<feature type="chain" id="PRO_0000340544" description="Probable alpha-L-glutamate ligase 1">
    <location>
        <begin position="1"/>
        <end position="302"/>
    </location>
</feature>
<feature type="domain" description="ATP-grasp" evidence="1">
    <location>
        <begin position="104"/>
        <end position="287"/>
    </location>
</feature>
<feature type="binding site" evidence="1">
    <location>
        <position position="141"/>
    </location>
    <ligand>
        <name>ATP</name>
        <dbReference type="ChEBI" id="CHEBI:30616"/>
    </ligand>
</feature>
<feature type="binding site" evidence="1">
    <location>
        <begin position="178"/>
        <end position="179"/>
    </location>
    <ligand>
        <name>ATP</name>
        <dbReference type="ChEBI" id="CHEBI:30616"/>
    </ligand>
</feature>
<feature type="binding site" evidence="1">
    <location>
        <position position="187"/>
    </location>
    <ligand>
        <name>ATP</name>
        <dbReference type="ChEBI" id="CHEBI:30616"/>
    </ligand>
</feature>
<feature type="binding site" evidence="1">
    <location>
        <begin position="211"/>
        <end position="213"/>
    </location>
    <ligand>
        <name>ATP</name>
        <dbReference type="ChEBI" id="CHEBI:30616"/>
    </ligand>
</feature>
<feature type="binding site" evidence="1">
    <location>
        <position position="248"/>
    </location>
    <ligand>
        <name>Mg(2+)</name>
        <dbReference type="ChEBI" id="CHEBI:18420"/>
        <label>1</label>
    </ligand>
</feature>
<feature type="binding site" evidence="1">
    <location>
        <position position="248"/>
    </location>
    <ligand>
        <name>Mn(2+)</name>
        <dbReference type="ChEBI" id="CHEBI:29035"/>
        <label>1</label>
    </ligand>
</feature>
<feature type="binding site" evidence="1">
    <location>
        <position position="260"/>
    </location>
    <ligand>
        <name>Mg(2+)</name>
        <dbReference type="ChEBI" id="CHEBI:18420"/>
        <label>1</label>
    </ligand>
</feature>
<feature type="binding site" evidence="1">
    <location>
        <position position="260"/>
    </location>
    <ligand>
        <name>Mg(2+)</name>
        <dbReference type="ChEBI" id="CHEBI:18420"/>
        <label>2</label>
    </ligand>
</feature>
<feature type="binding site" evidence="1">
    <location>
        <position position="260"/>
    </location>
    <ligand>
        <name>Mn(2+)</name>
        <dbReference type="ChEBI" id="CHEBI:29035"/>
        <label>1</label>
    </ligand>
</feature>
<feature type="binding site" evidence="1">
    <location>
        <position position="260"/>
    </location>
    <ligand>
        <name>Mn(2+)</name>
        <dbReference type="ChEBI" id="CHEBI:29035"/>
        <label>2</label>
    </ligand>
</feature>
<feature type="binding site" evidence="1">
    <location>
        <position position="262"/>
    </location>
    <ligand>
        <name>Mg(2+)</name>
        <dbReference type="ChEBI" id="CHEBI:18420"/>
        <label>2</label>
    </ligand>
</feature>
<feature type="binding site" evidence="1">
    <location>
        <position position="262"/>
    </location>
    <ligand>
        <name>Mn(2+)</name>
        <dbReference type="ChEBI" id="CHEBI:29035"/>
        <label>2</label>
    </ligand>
</feature>
<name>RIMK1_PSEA6</name>
<proteinExistence type="inferred from homology"/>
<organism>
    <name type="scientific">Pseudoalteromonas atlantica (strain T6c / ATCC BAA-1087)</name>
    <dbReference type="NCBI Taxonomy" id="3042615"/>
    <lineage>
        <taxon>Bacteria</taxon>
        <taxon>Pseudomonadati</taxon>
        <taxon>Pseudomonadota</taxon>
        <taxon>Gammaproteobacteria</taxon>
        <taxon>Alteromonadales</taxon>
        <taxon>Alteromonadaceae</taxon>
        <taxon>Paraglaciecola</taxon>
    </lineage>
</organism>